<comment type="function">
    <text evidence="1 3 4">Acts as a component of the histone deacetylase NuRD complex which participates in the remodeling of chromatin (By similarity). Inhibits cell cycle G1/S phase transition by repressing CDK2 expression and activation; represses CDK2 activation by inhibiting its interaction with cyclin E and A (By similarity). Plays a role in regulating the self-renewal of embryonic stem cells (ESCs) and in maintaining cell survival during terminal differentiation of ESCs (PubMed:22548356). Regulates microtubule organization of metaphase II oocytes (PubMed:12944431).</text>
</comment>
<comment type="subunit">
    <text evidence="1 3">Component of the nucleosome remodeling and deacetylase (NuRD) repressor complex, composed of core proteins MTA1, MTA2, MTA3, RBBP4, RBBP7, HDAC1, HDAC2, MBD2, MBD3, and peripherally associated proteins CDK2AP1, CDK2AP2, GATAD2A, GATAD2B, CHD3, CHD4 and CHD5 (By similarity). The exact stoichiometry of the NuRD complex is unknown, and some subunits such as MBD2 and MBD3, GATAD2A and GATAD2B, and CHD3, CHD4 and CHD5 define mutually exclusive NuRD complexes (By similarity). Interacts with CDK2AP1 (By similarity). Interacts with CDK2 (By similarity). Interacts with MAPK1 (PubMed:12944431).</text>
</comment>
<comment type="subcellular location">
    <subcellularLocation>
        <location evidence="3">Cytoplasm</location>
    </subcellularLocation>
    <subcellularLocation>
        <location evidence="3">Nucleus</location>
    </subcellularLocation>
    <text evidence="3">Accumulates in immature oocytes in the nucleus. During the first meiotic division, accumulates in the cytoplasm and localizes in dots in the vicinity of the chromosomes in a region enriched in microtubules.</text>
</comment>
<comment type="tissue specificity">
    <text evidence="3">Oocytes (at protein level).</text>
</comment>
<comment type="PTM">
    <text evidence="3">Phosphorylated by MAPK1 and CDK2.</text>
</comment>
<comment type="similarity">
    <text evidence="5">Belongs to the CDK2AP family.</text>
</comment>
<sequence length="127" mass="13202">MSYKPIAPAPSSTPGSSTPGPGTPVPTAGSVPSPSGSVPGAAAPFRPLFNDFGPPSMGYVQAMKPPGSQGSQSTYTDLLSVIEEMGKEIRPTYAGSKSAMERLKRGIIHARALVRECLAETERNART</sequence>
<evidence type="ECO:0000250" key="1">
    <source>
        <dbReference type="UniProtKB" id="O75956"/>
    </source>
</evidence>
<evidence type="ECO:0000256" key="2">
    <source>
        <dbReference type="SAM" id="MobiDB-lite"/>
    </source>
</evidence>
<evidence type="ECO:0000269" key="3">
    <source>
    </source>
</evidence>
<evidence type="ECO:0000269" key="4">
    <source>
    </source>
</evidence>
<evidence type="ECO:0000305" key="5"/>
<dbReference type="EMBL" id="AK003686">
    <property type="protein sequence ID" value="BAB22939.1"/>
    <property type="molecule type" value="mRNA"/>
</dbReference>
<dbReference type="EMBL" id="AK012121">
    <property type="protein sequence ID" value="BAB28046.1"/>
    <property type="molecule type" value="mRNA"/>
</dbReference>
<dbReference type="EMBL" id="AK018035">
    <property type="protein sequence ID" value="BAB31046.1"/>
    <property type="molecule type" value="mRNA"/>
</dbReference>
<dbReference type="EMBL" id="BC025656">
    <property type="protein sequence ID" value="AAH25656.1"/>
    <property type="molecule type" value="mRNA"/>
</dbReference>
<dbReference type="CCDS" id="CCDS29414.1"/>
<dbReference type="RefSeq" id="NP_080649.1">
    <property type="nucleotide sequence ID" value="NM_026373.4"/>
</dbReference>
<dbReference type="BMRB" id="Q9CPY4"/>
<dbReference type="SMR" id="Q9CPY4"/>
<dbReference type="FunCoup" id="Q9CPY4">
    <property type="interactions" value="1410"/>
</dbReference>
<dbReference type="STRING" id="10090.ENSMUSP00000025779"/>
<dbReference type="GlyGen" id="Q9CPY4">
    <property type="glycosylation" value="3 sites"/>
</dbReference>
<dbReference type="iPTMnet" id="Q9CPY4"/>
<dbReference type="PhosphoSitePlus" id="Q9CPY4"/>
<dbReference type="PaxDb" id="10090-ENSMUSP00000025779"/>
<dbReference type="PeptideAtlas" id="Q9CPY4"/>
<dbReference type="Antibodypedia" id="30451">
    <property type="antibodies" value="167 antibodies from 23 providers"/>
</dbReference>
<dbReference type="Ensembl" id="ENSMUST00000025779.11">
    <property type="protein sequence ID" value="ENSMUSP00000025779.5"/>
    <property type="gene ID" value="ENSMUSG00000024856.11"/>
</dbReference>
<dbReference type="GeneID" id="52004"/>
<dbReference type="KEGG" id="mmu:52004"/>
<dbReference type="UCSC" id="uc008fym.1">
    <property type="organism name" value="mouse"/>
</dbReference>
<dbReference type="AGR" id="MGI:1098779"/>
<dbReference type="CTD" id="10263"/>
<dbReference type="MGI" id="MGI:1098779">
    <property type="gene designation" value="Cdk2ap2"/>
</dbReference>
<dbReference type="VEuPathDB" id="HostDB:ENSMUSG00000024856"/>
<dbReference type="eggNOG" id="KOG4713">
    <property type="taxonomic scope" value="Eukaryota"/>
</dbReference>
<dbReference type="GeneTree" id="ENSGT00940000160334"/>
<dbReference type="HOGENOM" id="CLU_130479_0_0_1"/>
<dbReference type="InParanoid" id="Q9CPY4"/>
<dbReference type="OMA" id="AHVTPKI"/>
<dbReference type="OrthoDB" id="9628807at2759"/>
<dbReference type="PhylomeDB" id="Q9CPY4"/>
<dbReference type="TreeFam" id="TF101037"/>
<dbReference type="BioGRID-ORCS" id="52004">
    <property type="hits" value="2 hits in 76 CRISPR screens"/>
</dbReference>
<dbReference type="ChiTaRS" id="Cdk2ap2">
    <property type="organism name" value="mouse"/>
</dbReference>
<dbReference type="PRO" id="PR:Q9CPY4"/>
<dbReference type="Proteomes" id="UP000000589">
    <property type="component" value="Chromosome 19"/>
</dbReference>
<dbReference type="RNAct" id="Q9CPY4">
    <property type="molecule type" value="protein"/>
</dbReference>
<dbReference type="Bgee" id="ENSMUSG00000024856">
    <property type="expression patterns" value="Expressed in granulocyte and 68 other cell types or tissues"/>
</dbReference>
<dbReference type="ExpressionAtlas" id="Q9CPY4">
    <property type="expression patterns" value="baseline and differential"/>
</dbReference>
<dbReference type="GO" id="GO:0005737">
    <property type="term" value="C:cytoplasm"/>
    <property type="evidence" value="ECO:0000314"/>
    <property type="project" value="UniProtKB"/>
</dbReference>
<dbReference type="GO" id="GO:0005874">
    <property type="term" value="C:microtubule"/>
    <property type="evidence" value="ECO:0000314"/>
    <property type="project" value="UniProtKB"/>
</dbReference>
<dbReference type="GO" id="GO:0005634">
    <property type="term" value="C:nucleus"/>
    <property type="evidence" value="ECO:0000314"/>
    <property type="project" value="UniProtKB"/>
</dbReference>
<dbReference type="GO" id="GO:0016581">
    <property type="term" value="C:NuRD complex"/>
    <property type="evidence" value="ECO:0000250"/>
    <property type="project" value="UniProtKB"/>
</dbReference>
<dbReference type="GO" id="GO:2000134">
    <property type="term" value="P:negative regulation of G1/S transition of mitotic cell cycle"/>
    <property type="evidence" value="ECO:0000250"/>
    <property type="project" value="UniProtKB"/>
</dbReference>
<dbReference type="GO" id="GO:0070507">
    <property type="term" value="P:regulation of microtubule cytoskeleton organization"/>
    <property type="evidence" value="ECO:0000315"/>
    <property type="project" value="UniProtKB"/>
</dbReference>
<dbReference type="GO" id="GO:2000035">
    <property type="term" value="P:regulation of stem cell division"/>
    <property type="evidence" value="ECO:0000315"/>
    <property type="project" value="UniProtKB"/>
</dbReference>
<dbReference type="Gene3D" id="6.10.140.1300">
    <property type="match status" value="1"/>
</dbReference>
<dbReference type="InterPro" id="IPR017266">
    <property type="entry name" value="DOC_1/2"/>
</dbReference>
<dbReference type="PANTHER" id="PTHR22607:SF4">
    <property type="entry name" value="CYCLIN-DEPENDENT KINASE 2-ASSOCIATED PROTEIN 2"/>
    <property type="match status" value="1"/>
</dbReference>
<dbReference type="PANTHER" id="PTHR22607">
    <property type="entry name" value="DELETED IN ORAL CANCER 1/CDK2-ASSOCIATED PROTEIN 1"/>
    <property type="match status" value="1"/>
</dbReference>
<dbReference type="Pfam" id="PF09806">
    <property type="entry name" value="CDK2AP"/>
    <property type="match status" value="1"/>
</dbReference>
<dbReference type="PIRSF" id="PIRSF037709">
    <property type="entry name" value="CDK2-associated_p2"/>
    <property type="match status" value="1"/>
</dbReference>
<reference key="1">
    <citation type="journal article" date="2005" name="Science">
        <title>The transcriptional landscape of the mammalian genome.</title>
        <authorList>
            <person name="Carninci P."/>
            <person name="Kasukawa T."/>
            <person name="Katayama S."/>
            <person name="Gough J."/>
            <person name="Frith M.C."/>
            <person name="Maeda N."/>
            <person name="Oyama R."/>
            <person name="Ravasi T."/>
            <person name="Lenhard B."/>
            <person name="Wells C."/>
            <person name="Kodzius R."/>
            <person name="Shimokawa K."/>
            <person name="Bajic V.B."/>
            <person name="Brenner S.E."/>
            <person name="Batalov S."/>
            <person name="Forrest A.R."/>
            <person name="Zavolan M."/>
            <person name="Davis M.J."/>
            <person name="Wilming L.G."/>
            <person name="Aidinis V."/>
            <person name="Allen J.E."/>
            <person name="Ambesi-Impiombato A."/>
            <person name="Apweiler R."/>
            <person name="Aturaliya R.N."/>
            <person name="Bailey T.L."/>
            <person name="Bansal M."/>
            <person name="Baxter L."/>
            <person name="Beisel K.W."/>
            <person name="Bersano T."/>
            <person name="Bono H."/>
            <person name="Chalk A.M."/>
            <person name="Chiu K.P."/>
            <person name="Choudhary V."/>
            <person name="Christoffels A."/>
            <person name="Clutterbuck D.R."/>
            <person name="Crowe M.L."/>
            <person name="Dalla E."/>
            <person name="Dalrymple B.P."/>
            <person name="de Bono B."/>
            <person name="Della Gatta G."/>
            <person name="di Bernardo D."/>
            <person name="Down T."/>
            <person name="Engstrom P."/>
            <person name="Fagiolini M."/>
            <person name="Faulkner G."/>
            <person name="Fletcher C.F."/>
            <person name="Fukushima T."/>
            <person name="Furuno M."/>
            <person name="Futaki S."/>
            <person name="Gariboldi M."/>
            <person name="Georgii-Hemming P."/>
            <person name="Gingeras T.R."/>
            <person name="Gojobori T."/>
            <person name="Green R.E."/>
            <person name="Gustincich S."/>
            <person name="Harbers M."/>
            <person name="Hayashi Y."/>
            <person name="Hensch T.K."/>
            <person name="Hirokawa N."/>
            <person name="Hill D."/>
            <person name="Huminiecki L."/>
            <person name="Iacono M."/>
            <person name="Ikeo K."/>
            <person name="Iwama A."/>
            <person name="Ishikawa T."/>
            <person name="Jakt M."/>
            <person name="Kanapin A."/>
            <person name="Katoh M."/>
            <person name="Kawasawa Y."/>
            <person name="Kelso J."/>
            <person name="Kitamura H."/>
            <person name="Kitano H."/>
            <person name="Kollias G."/>
            <person name="Krishnan S.P."/>
            <person name="Kruger A."/>
            <person name="Kummerfeld S.K."/>
            <person name="Kurochkin I.V."/>
            <person name="Lareau L.F."/>
            <person name="Lazarevic D."/>
            <person name="Lipovich L."/>
            <person name="Liu J."/>
            <person name="Liuni S."/>
            <person name="McWilliam S."/>
            <person name="Madan Babu M."/>
            <person name="Madera M."/>
            <person name="Marchionni L."/>
            <person name="Matsuda H."/>
            <person name="Matsuzawa S."/>
            <person name="Miki H."/>
            <person name="Mignone F."/>
            <person name="Miyake S."/>
            <person name="Morris K."/>
            <person name="Mottagui-Tabar S."/>
            <person name="Mulder N."/>
            <person name="Nakano N."/>
            <person name="Nakauchi H."/>
            <person name="Ng P."/>
            <person name="Nilsson R."/>
            <person name="Nishiguchi S."/>
            <person name="Nishikawa S."/>
            <person name="Nori F."/>
            <person name="Ohara O."/>
            <person name="Okazaki Y."/>
            <person name="Orlando V."/>
            <person name="Pang K.C."/>
            <person name="Pavan W.J."/>
            <person name="Pavesi G."/>
            <person name="Pesole G."/>
            <person name="Petrovsky N."/>
            <person name="Piazza S."/>
            <person name="Reed J."/>
            <person name="Reid J.F."/>
            <person name="Ring B.Z."/>
            <person name="Ringwald M."/>
            <person name="Rost B."/>
            <person name="Ruan Y."/>
            <person name="Salzberg S.L."/>
            <person name="Sandelin A."/>
            <person name="Schneider C."/>
            <person name="Schoenbach C."/>
            <person name="Sekiguchi K."/>
            <person name="Semple C.A."/>
            <person name="Seno S."/>
            <person name="Sessa L."/>
            <person name="Sheng Y."/>
            <person name="Shibata Y."/>
            <person name="Shimada H."/>
            <person name="Shimada K."/>
            <person name="Silva D."/>
            <person name="Sinclair B."/>
            <person name="Sperling S."/>
            <person name="Stupka E."/>
            <person name="Sugiura K."/>
            <person name="Sultana R."/>
            <person name="Takenaka Y."/>
            <person name="Taki K."/>
            <person name="Tammoja K."/>
            <person name="Tan S.L."/>
            <person name="Tang S."/>
            <person name="Taylor M.S."/>
            <person name="Tegner J."/>
            <person name="Teichmann S.A."/>
            <person name="Ueda H.R."/>
            <person name="van Nimwegen E."/>
            <person name="Verardo R."/>
            <person name="Wei C.L."/>
            <person name="Yagi K."/>
            <person name="Yamanishi H."/>
            <person name="Zabarovsky E."/>
            <person name="Zhu S."/>
            <person name="Zimmer A."/>
            <person name="Hide W."/>
            <person name="Bult C."/>
            <person name="Grimmond S.M."/>
            <person name="Teasdale R.D."/>
            <person name="Liu E.T."/>
            <person name="Brusic V."/>
            <person name="Quackenbush J."/>
            <person name="Wahlestedt C."/>
            <person name="Mattick J.S."/>
            <person name="Hume D.A."/>
            <person name="Kai C."/>
            <person name="Sasaki D."/>
            <person name="Tomaru Y."/>
            <person name="Fukuda S."/>
            <person name="Kanamori-Katayama M."/>
            <person name="Suzuki M."/>
            <person name="Aoki J."/>
            <person name="Arakawa T."/>
            <person name="Iida J."/>
            <person name="Imamura K."/>
            <person name="Itoh M."/>
            <person name="Kato T."/>
            <person name="Kawaji H."/>
            <person name="Kawagashira N."/>
            <person name="Kawashima T."/>
            <person name="Kojima M."/>
            <person name="Kondo S."/>
            <person name="Konno H."/>
            <person name="Nakano K."/>
            <person name="Ninomiya N."/>
            <person name="Nishio T."/>
            <person name="Okada M."/>
            <person name="Plessy C."/>
            <person name="Shibata K."/>
            <person name="Shiraki T."/>
            <person name="Suzuki S."/>
            <person name="Tagami M."/>
            <person name="Waki K."/>
            <person name="Watahiki A."/>
            <person name="Okamura-Oho Y."/>
            <person name="Suzuki H."/>
            <person name="Kawai J."/>
            <person name="Hayashizaki Y."/>
        </authorList>
    </citation>
    <scope>NUCLEOTIDE SEQUENCE [LARGE SCALE MRNA]</scope>
    <source>
        <strain>C57BL/6J</strain>
        <tissue>Embryo</tissue>
        <tissue>Thymus</tissue>
    </source>
</reference>
<reference key="2">
    <citation type="journal article" date="2004" name="Genome Res.">
        <title>The status, quality, and expansion of the NIH full-length cDNA project: the Mammalian Gene Collection (MGC).</title>
        <authorList>
            <consortium name="The MGC Project Team"/>
        </authorList>
    </citation>
    <scope>NUCLEOTIDE SEQUENCE [LARGE SCALE MRNA]</scope>
    <source>
        <strain>FVB/N</strain>
        <tissue>Mammary tumor</tissue>
    </source>
</reference>
<reference key="3">
    <citation type="journal article" date="2003" name="Development">
        <title>DOC1R: a MAP kinase substrate that control microtubule organization of metaphase II mouse oocytes.</title>
        <authorList>
            <person name="Terret M.E."/>
            <person name="Lefebvre C."/>
            <person name="Djiane A."/>
            <person name="Rassinier P."/>
            <person name="Moreau J."/>
            <person name="Maro B."/>
            <person name="Verlhac M.H."/>
        </authorList>
    </citation>
    <scope>FUNCTION</scope>
    <scope>INTERACTION WITH MAPK1</scope>
    <scope>TISSUE SPECIFICITY</scope>
    <scope>SUBCELLULAR LOCATION</scope>
    <scope>PHOSPHORYLATION</scope>
</reference>
<reference key="4">
    <citation type="journal article" date="2012" name="Stem Cells Dev.">
        <title>Cdk2ap2 is a novel regulator for self-renewal of murine embryonic stem cells.</title>
        <authorList>
            <person name="Deshpande A.M."/>
            <person name="Khalid O."/>
            <person name="Kim J.J."/>
            <person name="Kim Y."/>
            <person name="Lindgren A."/>
            <person name="Clark A.T."/>
            <person name="Wong D.T."/>
        </authorList>
    </citation>
    <scope>FUNCTION</scope>
</reference>
<gene>
    <name type="primary">Cdk2ap2</name>
    <name type="synonym">D19Ertd144e</name>
    <name type="synonym">Doc1r</name>
</gene>
<organism>
    <name type="scientific">Mus musculus</name>
    <name type="common">Mouse</name>
    <dbReference type="NCBI Taxonomy" id="10090"/>
    <lineage>
        <taxon>Eukaryota</taxon>
        <taxon>Metazoa</taxon>
        <taxon>Chordata</taxon>
        <taxon>Craniata</taxon>
        <taxon>Vertebrata</taxon>
        <taxon>Euteleostomi</taxon>
        <taxon>Mammalia</taxon>
        <taxon>Eutheria</taxon>
        <taxon>Euarchontoglires</taxon>
        <taxon>Glires</taxon>
        <taxon>Rodentia</taxon>
        <taxon>Myomorpha</taxon>
        <taxon>Muroidea</taxon>
        <taxon>Muridae</taxon>
        <taxon>Murinae</taxon>
        <taxon>Mus</taxon>
        <taxon>Mus</taxon>
    </lineage>
</organism>
<feature type="chain" id="PRO_0000079964" description="Cyclin-dependent kinase 2-associated protein 2">
    <location>
        <begin position="1"/>
        <end position="127"/>
    </location>
</feature>
<feature type="region of interest" description="Disordered" evidence="2">
    <location>
        <begin position="1"/>
        <end position="47"/>
    </location>
</feature>
<feature type="region of interest" description="Interaction with CDK2" evidence="1">
    <location>
        <begin position="65"/>
        <end position="107"/>
    </location>
</feature>
<feature type="compositionally biased region" description="Low complexity" evidence="2">
    <location>
        <begin position="9"/>
        <end position="44"/>
    </location>
</feature>
<protein>
    <recommendedName>
        <fullName>Cyclin-dependent kinase 2-associated protein 2</fullName>
        <shortName>CDK2-associated protein 2</shortName>
    </recommendedName>
    <alternativeName>
        <fullName>DOC-1-related protein</fullName>
        <shortName>DOC-1R</shortName>
    </alternativeName>
</protein>
<keyword id="KW-0963">Cytoplasm</keyword>
<keyword id="KW-0539">Nucleus</keyword>
<keyword id="KW-0597">Phosphoprotein</keyword>
<keyword id="KW-1185">Reference proteome</keyword>
<name>CDKA2_MOUSE</name>
<accession>Q9CPY4</accession>
<proteinExistence type="evidence at protein level"/>